<proteinExistence type="inferred from homology"/>
<reference key="1">
    <citation type="journal article" date="2008" name="DNA Res.">
        <title>Complete genome sequence and comparative analysis of the wild-type commensal Escherichia coli strain SE11 isolated from a healthy adult.</title>
        <authorList>
            <person name="Oshima K."/>
            <person name="Toh H."/>
            <person name="Ogura Y."/>
            <person name="Sasamoto H."/>
            <person name="Morita H."/>
            <person name="Park S.-H."/>
            <person name="Ooka T."/>
            <person name="Iyoda S."/>
            <person name="Taylor T.D."/>
            <person name="Hayashi T."/>
            <person name="Itoh K."/>
            <person name="Hattori M."/>
        </authorList>
    </citation>
    <scope>NUCLEOTIDE SEQUENCE [LARGE SCALE GENOMIC DNA]</scope>
    <source>
        <strain>SE11</strain>
    </source>
</reference>
<sequence length="489" mass="54064">MTFRNCVAVDLGASSGRVMLARYERECRSLTLREIHRFKNGLHSQNGYVTWNVDSLESAIRLGLNKVCEEGIRIDSIGIDTWGVDFVLLDQQGQRVGLPVAYRDSRTNGLMAQAQQQLGKRDIYQRSGIQFLPFNTLYQLRALTEQQPELIPHIAHALLMPDYFSYRLTGKMNWEYTNATTTQLVNINSDDWDESLLAWSGANKAWFGRPTHPGNVIGHWICPQGNEIPVVAVASHDTASAVIASPLNGSRAAYLSSGTWSLMGFESQTPFTNDTALAANITNEGGAEGRYRVLKNIMGLWLLQRVLQERQINDLPALIAATQALPACRFIINPNDDRFINPEAMCSEIQAACRETAQPIPESDAELARCIFDSLALLYADVLHELAQLRGEDFSQLHIVGGGCQNTLLNQLCADACGIRVIAGPVEASTLGNIGIQLMTLDELNNVDDFRQVVSTTANLTTFTPNPDSEIAHYVAQIHSTRQTKELCA</sequence>
<comment type="function">
    <text evidence="1">Involved in the catabolism of L-rhamnose (6-deoxy-L-mannose). Catalyzes the transfer of the gamma-phosphate group from ATP to the 1-hydroxyl group of L-rhamnulose to yield L-rhamnulose 1-phosphate.</text>
</comment>
<comment type="catalytic activity">
    <reaction evidence="1">
        <text>L-rhamnulose + ATP = L-rhamnulose 1-phosphate + ADP + H(+)</text>
        <dbReference type="Rhea" id="RHEA:20117"/>
        <dbReference type="ChEBI" id="CHEBI:15378"/>
        <dbReference type="ChEBI" id="CHEBI:17897"/>
        <dbReference type="ChEBI" id="CHEBI:30616"/>
        <dbReference type="ChEBI" id="CHEBI:58313"/>
        <dbReference type="ChEBI" id="CHEBI:456216"/>
        <dbReference type="EC" id="2.7.1.5"/>
    </reaction>
</comment>
<comment type="cofactor">
    <cofactor evidence="1">
        <name>Mg(2+)</name>
        <dbReference type="ChEBI" id="CHEBI:18420"/>
    </cofactor>
</comment>
<comment type="pathway">
    <text evidence="1">Carbohydrate degradation; L-rhamnose degradation; glycerone phosphate from L-rhamnose: step 2/3.</text>
</comment>
<comment type="subunit">
    <text evidence="1">Monomer.</text>
</comment>
<comment type="similarity">
    <text evidence="1">Belongs to the rhamnulokinase family.</text>
</comment>
<evidence type="ECO:0000255" key="1">
    <source>
        <dbReference type="HAMAP-Rule" id="MF_01535"/>
    </source>
</evidence>
<protein>
    <recommendedName>
        <fullName evidence="1">Rhamnulokinase</fullName>
        <shortName evidence="1">RhaB</shortName>
        <ecNumber evidence="1">2.7.1.5</ecNumber>
    </recommendedName>
    <alternativeName>
        <fullName evidence="1">ATP:L-rhamnulose phosphotransferase</fullName>
    </alternativeName>
    <alternativeName>
        <fullName evidence="1">L-rhamnulose 1-kinase</fullName>
    </alternativeName>
    <alternativeName>
        <fullName evidence="1">Rhamnulose kinase</fullName>
    </alternativeName>
</protein>
<dbReference type="EC" id="2.7.1.5" evidence="1"/>
<dbReference type="EMBL" id="AP009240">
    <property type="protein sequence ID" value="BAG79716.1"/>
    <property type="molecule type" value="Genomic_DNA"/>
</dbReference>
<dbReference type="RefSeq" id="WP_000144056.1">
    <property type="nucleotide sequence ID" value="NC_011415.1"/>
</dbReference>
<dbReference type="SMR" id="B6I4P6"/>
<dbReference type="KEGG" id="ecy:ECSE_4192"/>
<dbReference type="HOGENOM" id="CLU_039395_0_0_6"/>
<dbReference type="UniPathway" id="UPA00541">
    <property type="reaction ID" value="UER00602"/>
</dbReference>
<dbReference type="Proteomes" id="UP000008199">
    <property type="component" value="Chromosome"/>
</dbReference>
<dbReference type="GO" id="GO:0005829">
    <property type="term" value="C:cytosol"/>
    <property type="evidence" value="ECO:0007669"/>
    <property type="project" value="TreeGrafter"/>
</dbReference>
<dbReference type="GO" id="GO:0005524">
    <property type="term" value="F:ATP binding"/>
    <property type="evidence" value="ECO:0007669"/>
    <property type="project" value="UniProtKB-KW"/>
</dbReference>
<dbReference type="GO" id="GO:0004370">
    <property type="term" value="F:glycerol kinase activity"/>
    <property type="evidence" value="ECO:0007669"/>
    <property type="project" value="TreeGrafter"/>
</dbReference>
<dbReference type="GO" id="GO:0008993">
    <property type="term" value="F:rhamnulokinase activity"/>
    <property type="evidence" value="ECO:0007669"/>
    <property type="project" value="UniProtKB-UniRule"/>
</dbReference>
<dbReference type="GO" id="GO:0006071">
    <property type="term" value="P:glycerol metabolic process"/>
    <property type="evidence" value="ECO:0007669"/>
    <property type="project" value="TreeGrafter"/>
</dbReference>
<dbReference type="GO" id="GO:0019301">
    <property type="term" value="P:rhamnose catabolic process"/>
    <property type="evidence" value="ECO:0007669"/>
    <property type="project" value="UniProtKB-UniRule"/>
</dbReference>
<dbReference type="CDD" id="cd07771">
    <property type="entry name" value="ASKHA_NBD_FGGY_RhaB-like"/>
    <property type="match status" value="1"/>
</dbReference>
<dbReference type="FunFam" id="3.30.420.40:FF:000064">
    <property type="entry name" value="Rhamnulokinase"/>
    <property type="match status" value="1"/>
</dbReference>
<dbReference type="FunFam" id="3.30.420.40:FF:000073">
    <property type="entry name" value="Rhamnulokinase"/>
    <property type="match status" value="1"/>
</dbReference>
<dbReference type="Gene3D" id="3.30.420.40">
    <property type="match status" value="2"/>
</dbReference>
<dbReference type="HAMAP" id="MF_01535">
    <property type="entry name" value="Rhamnulokinase"/>
    <property type="match status" value="1"/>
</dbReference>
<dbReference type="InterPro" id="IPR043129">
    <property type="entry name" value="ATPase_NBD"/>
</dbReference>
<dbReference type="InterPro" id="IPR018485">
    <property type="entry name" value="FGGY_C"/>
</dbReference>
<dbReference type="InterPro" id="IPR018484">
    <property type="entry name" value="FGGY_N"/>
</dbReference>
<dbReference type="InterPro" id="IPR013449">
    <property type="entry name" value="Rhamnulokinase"/>
</dbReference>
<dbReference type="NCBIfam" id="NF007925">
    <property type="entry name" value="PRK10640.1"/>
    <property type="match status" value="1"/>
</dbReference>
<dbReference type="NCBIfam" id="TIGR02627">
    <property type="entry name" value="rhamnulo_kin"/>
    <property type="match status" value="1"/>
</dbReference>
<dbReference type="PANTHER" id="PTHR10196:SF93">
    <property type="entry name" value="L-RHAMNULOKINASE"/>
    <property type="match status" value="1"/>
</dbReference>
<dbReference type="PANTHER" id="PTHR10196">
    <property type="entry name" value="SUGAR KINASE"/>
    <property type="match status" value="1"/>
</dbReference>
<dbReference type="Pfam" id="PF02782">
    <property type="entry name" value="FGGY_C"/>
    <property type="match status" value="1"/>
</dbReference>
<dbReference type="Pfam" id="PF00370">
    <property type="entry name" value="FGGY_N"/>
    <property type="match status" value="1"/>
</dbReference>
<dbReference type="SUPFAM" id="SSF53067">
    <property type="entry name" value="Actin-like ATPase domain"/>
    <property type="match status" value="2"/>
</dbReference>
<accession>B6I4P6</accession>
<name>RHAB_ECOSE</name>
<feature type="chain" id="PRO_1000146544" description="Rhamnulokinase">
    <location>
        <begin position="1"/>
        <end position="489"/>
    </location>
</feature>
<feature type="active site" description="Proton acceptor" evidence="1">
    <location>
        <position position="237"/>
    </location>
</feature>
<feature type="binding site" evidence="1">
    <location>
        <begin position="13"/>
        <end position="17"/>
    </location>
    <ligand>
        <name>ATP</name>
        <dbReference type="ChEBI" id="CHEBI:30616"/>
    </ligand>
</feature>
<feature type="binding site" evidence="1">
    <location>
        <position position="83"/>
    </location>
    <ligand>
        <name>substrate</name>
    </ligand>
</feature>
<feature type="binding site" evidence="1">
    <location>
        <begin position="236"/>
        <end position="238"/>
    </location>
    <ligand>
        <name>substrate</name>
    </ligand>
</feature>
<feature type="binding site" evidence="1">
    <location>
        <position position="259"/>
    </location>
    <ligand>
        <name>ATP</name>
        <dbReference type="ChEBI" id="CHEBI:30616"/>
    </ligand>
</feature>
<feature type="binding site" evidence="1">
    <location>
        <position position="296"/>
    </location>
    <ligand>
        <name>substrate</name>
    </ligand>
</feature>
<feature type="binding site" evidence="1">
    <location>
        <position position="304"/>
    </location>
    <ligand>
        <name>ATP</name>
        <dbReference type="ChEBI" id="CHEBI:30616"/>
    </ligand>
</feature>
<feature type="binding site" evidence="1">
    <location>
        <position position="402"/>
    </location>
    <ligand>
        <name>ATP</name>
        <dbReference type="ChEBI" id="CHEBI:30616"/>
    </ligand>
</feature>
<feature type="disulfide bond" evidence="1">
    <location>
        <begin position="68"/>
        <end position="222"/>
    </location>
</feature>
<feature type="disulfide bond" evidence="1">
    <location>
        <begin position="353"/>
        <end position="370"/>
    </location>
</feature>
<feature type="disulfide bond" evidence="1">
    <location>
        <begin position="413"/>
        <end position="417"/>
    </location>
</feature>
<keyword id="KW-0067">ATP-binding</keyword>
<keyword id="KW-1015">Disulfide bond</keyword>
<keyword id="KW-0418">Kinase</keyword>
<keyword id="KW-0460">Magnesium</keyword>
<keyword id="KW-0547">Nucleotide-binding</keyword>
<keyword id="KW-0684">Rhamnose metabolism</keyword>
<keyword id="KW-0808">Transferase</keyword>
<gene>
    <name evidence="1" type="primary">rhaB</name>
    <name type="ordered locus">ECSE_4192</name>
</gene>
<organism>
    <name type="scientific">Escherichia coli (strain SE11)</name>
    <dbReference type="NCBI Taxonomy" id="409438"/>
    <lineage>
        <taxon>Bacteria</taxon>
        <taxon>Pseudomonadati</taxon>
        <taxon>Pseudomonadota</taxon>
        <taxon>Gammaproteobacteria</taxon>
        <taxon>Enterobacterales</taxon>
        <taxon>Enterobacteriaceae</taxon>
        <taxon>Escherichia</taxon>
    </lineage>
</organism>